<name>VP37C_PONAB</name>
<accession>Q5R9T2</accession>
<dbReference type="EMBL" id="CR859300">
    <property type="protein sequence ID" value="CAH91478.1"/>
    <property type="molecule type" value="mRNA"/>
</dbReference>
<dbReference type="RefSeq" id="NP_001125870.1">
    <property type="nucleotide sequence ID" value="NM_001132398.1"/>
</dbReference>
<dbReference type="SMR" id="Q5R9T2"/>
<dbReference type="FunCoup" id="Q5R9T2">
    <property type="interactions" value="557"/>
</dbReference>
<dbReference type="STRING" id="9601.ENSPPYP00000003686"/>
<dbReference type="GeneID" id="100172801"/>
<dbReference type="KEGG" id="pon:100172801"/>
<dbReference type="CTD" id="55048"/>
<dbReference type="eggNOG" id="KOG3270">
    <property type="taxonomic scope" value="Eukaryota"/>
</dbReference>
<dbReference type="InParanoid" id="Q5R9T2"/>
<dbReference type="OrthoDB" id="10004364at2759"/>
<dbReference type="Proteomes" id="UP000001595">
    <property type="component" value="Unplaced"/>
</dbReference>
<dbReference type="GO" id="GO:0000813">
    <property type="term" value="C:ESCRT I complex"/>
    <property type="evidence" value="ECO:0000250"/>
    <property type="project" value="UniProtKB"/>
</dbReference>
<dbReference type="GO" id="GO:0031902">
    <property type="term" value="C:late endosome membrane"/>
    <property type="evidence" value="ECO:0007669"/>
    <property type="project" value="UniProtKB-SubCell"/>
</dbReference>
<dbReference type="GO" id="GO:0016236">
    <property type="term" value="P:macroautophagy"/>
    <property type="evidence" value="ECO:0007669"/>
    <property type="project" value="UniProtKB-ARBA"/>
</dbReference>
<dbReference type="GO" id="GO:0036258">
    <property type="term" value="P:multivesicular body assembly"/>
    <property type="evidence" value="ECO:0007669"/>
    <property type="project" value="UniProtKB-ARBA"/>
</dbReference>
<dbReference type="GO" id="GO:0006612">
    <property type="term" value="P:protein targeting to membrane"/>
    <property type="evidence" value="ECO:0007669"/>
    <property type="project" value="TreeGrafter"/>
</dbReference>
<dbReference type="GO" id="GO:0006623">
    <property type="term" value="P:protein targeting to vacuole"/>
    <property type="evidence" value="ECO:0007669"/>
    <property type="project" value="TreeGrafter"/>
</dbReference>
<dbReference type="GO" id="GO:0043162">
    <property type="term" value="P:ubiquitin-dependent protein catabolic process via the multivesicular body sorting pathway"/>
    <property type="evidence" value="ECO:0007669"/>
    <property type="project" value="TreeGrafter"/>
</dbReference>
<dbReference type="GO" id="GO:0039702">
    <property type="term" value="P:viral budding via host ESCRT complex"/>
    <property type="evidence" value="ECO:0007669"/>
    <property type="project" value="UniProtKB-ARBA"/>
</dbReference>
<dbReference type="FunFam" id="1.10.287.660:FF:000003">
    <property type="entry name" value="vacuolar protein sorting-associated protein 37B"/>
    <property type="match status" value="1"/>
</dbReference>
<dbReference type="InterPro" id="IPR037202">
    <property type="entry name" value="ESCRT_assembly_dom"/>
</dbReference>
<dbReference type="InterPro" id="IPR009851">
    <property type="entry name" value="Mod_r"/>
</dbReference>
<dbReference type="PANTHER" id="PTHR13678">
    <property type="entry name" value="VACUOLAR PROTEIN SORTING-ASSOCIATED PROTEIN 37"/>
    <property type="match status" value="1"/>
</dbReference>
<dbReference type="PANTHER" id="PTHR13678:SF8">
    <property type="entry name" value="VACUOLAR PROTEIN SORTING-ASSOCIATED PROTEIN 37C"/>
    <property type="match status" value="1"/>
</dbReference>
<dbReference type="Pfam" id="PF07200">
    <property type="entry name" value="Mod_r"/>
    <property type="match status" value="1"/>
</dbReference>
<dbReference type="SUPFAM" id="SSF140111">
    <property type="entry name" value="Endosomal sorting complex assembly domain"/>
    <property type="match status" value="1"/>
</dbReference>
<dbReference type="PROSITE" id="PS51314">
    <property type="entry name" value="VPS37_C"/>
    <property type="match status" value="1"/>
</dbReference>
<reference key="1">
    <citation type="submission" date="2004-11" db="EMBL/GenBank/DDBJ databases">
        <authorList>
            <consortium name="The German cDNA consortium"/>
        </authorList>
    </citation>
    <scope>NUCLEOTIDE SEQUENCE [LARGE SCALE MRNA]</scope>
    <source>
        <tissue>Heart</tissue>
    </source>
</reference>
<comment type="function">
    <text evidence="1">Component of the ESCRT-I complex, a regulator of vesicular trafficking process. Required for the sorting of endocytic ubiquitinated cargos into multivesicular bodies. May be involved in cell growth and differentiation (By similarity).</text>
</comment>
<comment type="subunit">
    <text evidence="1">Component of the ESCRT-I complex (endosomal sorting complex required for transport I) which consists of TSG101, VPS28, a VPS37 protein (VPS37A to -D) and MVB12A or MVB12B in a 1:1:1:1 stoichiometry. Interacts with TSG101, VPS28, MVB12A and MVB12B. Component of the ESCRT-I complex (endosomal sorting complex required for transport I) which consists of TSG101, VPS28, a VPS37 protein (VPS37A to -D) and UBAP1 in a 1:1:1:1 stoichiometry. Interacts with HGS and STAM2. Interacts with CEP55 (By similarity).</text>
</comment>
<comment type="subcellular location">
    <subcellularLocation>
        <location evidence="1">Late endosome membrane</location>
        <topology evidence="1">Peripheral membrane protein</topology>
    </subcellularLocation>
    <text evidence="1">Probably associates with membranes.</text>
</comment>
<comment type="PTM">
    <text evidence="1">Phosphorylated by TBK1.</text>
</comment>
<comment type="similarity">
    <text evidence="5">Belongs to the VPS37 family.</text>
</comment>
<sequence length="355" mass="38394">METLKDKTLQELEELQNDSEAIDQLALESPEVQDLQLEREMALATNRSLAERNLEFQGPLEISRSNLSDKYQELRKLVERCQEQKAKLEKFSSALQPGTLLDLLQVEGMKIEGESEAMAEKFLEGEVPLETFLENFSSMRMLSHLRRVRVEKLQEVVRKPRASQELAGDAPPPRPPPPVRPVPQGTPPVVEEQPQPPSAMPPYPLPYSLSPSLPVGSTAHGALPPAPFPVVSQPSFYSGPLGPTYPAAQPGPRGAAGYSWSPQRSTPPRPGYPGTPTGASGPGYPLAGGRALSPGYPQQSPYPATGGKPPYPIQPQLPSFPGQPQPSVPLQPPYPPGPAPPYGFPPPPGPAWPGY</sequence>
<keyword id="KW-0967">Endosome</keyword>
<keyword id="KW-0472">Membrane</keyword>
<keyword id="KW-0597">Phosphoprotein</keyword>
<keyword id="KW-0653">Protein transport</keyword>
<keyword id="KW-1185">Reference proteome</keyword>
<keyword id="KW-0813">Transport</keyword>
<proteinExistence type="evidence at transcript level"/>
<organism>
    <name type="scientific">Pongo abelii</name>
    <name type="common">Sumatran orangutan</name>
    <name type="synonym">Pongo pygmaeus abelii</name>
    <dbReference type="NCBI Taxonomy" id="9601"/>
    <lineage>
        <taxon>Eukaryota</taxon>
        <taxon>Metazoa</taxon>
        <taxon>Chordata</taxon>
        <taxon>Craniata</taxon>
        <taxon>Vertebrata</taxon>
        <taxon>Euteleostomi</taxon>
        <taxon>Mammalia</taxon>
        <taxon>Eutheria</taxon>
        <taxon>Euarchontoglires</taxon>
        <taxon>Primates</taxon>
        <taxon>Haplorrhini</taxon>
        <taxon>Catarrhini</taxon>
        <taxon>Hominidae</taxon>
        <taxon>Pongo</taxon>
    </lineage>
</organism>
<feature type="chain" id="PRO_0000312200" description="Vacuolar protein sorting-associated protein 37C">
    <location>
        <begin position="1"/>
        <end position="355"/>
    </location>
</feature>
<feature type="domain" description="VPS37 C-terminal" evidence="3">
    <location>
        <begin position="78"/>
        <end position="167"/>
    </location>
</feature>
<feature type="region of interest" description="Disordered" evidence="4">
    <location>
        <begin position="159"/>
        <end position="355"/>
    </location>
</feature>
<feature type="compositionally biased region" description="Pro residues" evidence="4">
    <location>
        <begin position="170"/>
        <end position="186"/>
    </location>
</feature>
<feature type="compositionally biased region" description="Pro residues" evidence="4">
    <location>
        <begin position="194"/>
        <end position="205"/>
    </location>
</feature>
<feature type="compositionally biased region" description="Low complexity" evidence="4">
    <location>
        <begin position="246"/>
        <end position="257"/>
    </location>
</feature>
<feature type="compositionally biased region" description="Pro residues" evidence="4">
    <location>
        <begin position="321"/>
        <end position="355"/>
    </location>
</feature>
<feature type="modified residue" description="Phosphoserine" evidence="2">
    <location>
        <position position="29"/>
    </location>
</feature>
<evidence type="ECO:0000250" key="1"/>
<evidence type="ECO:0000250" key="2">
    <source>
        <dbReference type="UniProtKB" id="Q8R105"/>
    </source>
</evidence>
<evidence type="ECO:0000255" key="3">
    <source>
        <dbReference type="PROSITE-ProRule" id="PRU00646"/>
    </source>
</evidence>
<evidence type="ECO:0000256" key="4">
    <source>
        <dbReference type="SAM" id="MobiDB-lite"/>
    </source>
</evidence>
<evidence type="ECO:0000305" key="5"/>
<protein>
    <recommendedName>
        <fullName>Vacuolar protein sorting-associated protein 37C</fullName>
    </recommendedName>
    <alternativeName>
        <fullName>ESCRT-I complex subunit VPS37C</fullName>
    </alternativeName>
</protein>
<gene>
    <name type="primary">VPS37C</name>
</gene>